<organism>
    <name type="scientific">Euglena gracilis</name>
    <dbReference type="NCBI Taxonomy" id="3039"/>
    <lineage>
        <taxon>Eukaryota</taxon>
        <taxon>Discoba</taxon>
        <taxon>Euglenozoa</taxon>
        <taxon>Euglenida</taxon>
        <taxon>Spirocuta</taxon>
        <taxon>Euglenophyceae</taxon>
        <taxon>Euglenales</taxon>
        <taxon>Euglenaceae</taxon>
        <taxon>Euglena</taxon>
    </lineage>
</organism>
<evidence type="ECO:0000250" key="1"/>
<evidence type="ECO:0000255" key="2"/>
<evidence type="ECO:0000305" key="3"/>
<feature type="chain" id="PRO_0000207789" description="Photosystem I reaction center subunit IX">
    <location>
        <begin position="1"/>
        <end position="37"/>
    </location>
</feature>
<feature type="transmembrane region" description="Helical" evidence="2">
    <location>
        <begin position="7"/>
        <end position="27"/>
    </location>
</feature>
<geneLocation type="chloroplast"/>
<keyword id="KW-0150">Chloroplast</keyword>
<keyword id="KW-0472">Membrane</keyword>
<keyword id="KW-0602">Photosynthesis</keyword>
<keyword id="KW-0603">Photosystem I</keyword>
<keyword id="KW-0934">Plastid</keyword>
<keyword id="KW-0793">Thylakoid</keyword>
<keyword id="KW-0812">Transmembrane</keyword>
<keyword id="KW-1133">Transmembrane helix</keyword>
<accession>P30394</accession>
<reference key="1">
    <citation type="journal article" date="1988" name="Nucleic Acids Res.">
        <title>Nucleotide sequence of the Euglena gracilis chloroplast genes for serine and proline transfer RNAs and a functional open reading frame.</title>
        <authorList>
            <person name="Manzara T."/>
            <person name="Hallick R.B."/>
        </authorList>
    </citation>
    <scope>NUCLEOTIDE SEQUENCE [GENOMIC DNA]</scope>
    <source>
        <strain>Z / UTEX 753</strain>
    </source>
</reference>
<reference key="2">
    <citation type="journal article" date="1993" name="Curr. Genet.">
        <title>A novel Euglena gracilis chloroplast operon encoding four ATP synthase subunits and two ribosomal proteins contains 17 introns.</title>
        <authorList>
            <person name="Drager R.G."/>
            <person name="Hallick R.B."/>
        </authorList>
    </citation>
    <scope>NUCLEOTIDE SEQUENCE [GENOMIC DNA]</scope>
    <source>
        <strain>Z / UTEX 753</strain>
    </source>
</reference>
<reference key="3">
    <citation type="journal article" date="1993" name="Nucleic Acids Res.">
        <title>Complete sequence of Euglena gracilis chloroplast DNA.</title>
        <authorList>
            <person name="Hallick R.B."/>
            <person name="Hong L."/>
            <person name="Drager R.G."/>
            <person name="Favreau M.R."/>
            <person name="Monfort A."/>
            <person name="Orsat B."/>
            <person name="Spielmann A."/>
            <person name="Stutz E."/>
        </authorList>
    </citation>
    <scope>NUCLEOTIDE SEQUENCE [LARGE SCALE GENOMIC DNA]</scope>
    <source>
        <strain>Z / UTEX 753</strain>
    </source>
</reference>
<gene>
    <name type="primary">psaJ</name>
</gene>
<sequence>MKYFTTYLSTAPVVAVLWFTLTASLLIEINRFFPDIL</sequence>
<comment type="function">
    <text evidence="1">May help in the organization of the PsaE and PsaF subunits.</text>
</comment>
<comment type="subcellular location">
    <subcellularLocation>
        <location evidence="1">Plastid</location>
        <location evidence="1">Chloroplast thylakoid membrane</location>
        <topology evidence="1">Single-pass membrane protein</topology>
    </subcellularLocation>
</comment>
<comment type="similarity">
    <text evidence="3">Belongs to the PsaJ family.</text>
</comment>
<protein>
    <recommendedName>
        <fullName>Photosystem I reaction center subunit IX</fullName>
    </recommendedName>
    <alternativeName>
        <fullName>PSI-J</fullName>
    </alternativeName>
</protein>
<proteinExistence type="inferred from homology"/>
<dbReference type="EMBL" id="Z11874">
    <property type="protein sequence ID" value="CAA77934.1"/>
    <property type="molecule type" value="Genomic_DNA"/>
</dbReference>
<dbReference type="EMBL" id="M18672">
    <property type="protein sequence ID" value="AAA84231.1"/>
    <property type="molecule type" value="Genomic_DNA"/>
</dbReference>
<dbReference type="EMBL" id="X70810">
    <property type="status" value="NOT_ANNOTATED_CDS"/>
    <property type="molecule type" value="Genomic_DNA"/>
</dbReference>
<dbReference type="PIR" id="S03674">
    <property type="entry name" value="S03674"/>
</dbReference>
<dbReference type="RefSeq" id="YP_002720092.1">
    <property type="nucleotide sequence ID" value="NC_001603.2"/>
</dbReference>
<dbReference type="SMR" id="P30394"/>
<dbReference type="GeneID" id="807523"/>
<dbReference type="GO" id="GO:0009535">
    <property type="term" value="C:chloroplast thylakoid membrane"/>
    <property type="evidence" value="ECO:0007669"/>
    <property type="project" value="UniProtKB-SubCell"/>
</dbReference>
<dbReference type="GO" id="GO:0009522">
    <property type="term" value="C:photosystem I"/>
    <property type="evidence" value="ECO:0007669"/>
    <property type="project" value="UniProtKB-KW"/>
</dbReference>
<dbReference type="GO" id="GO:0015979">
    <property type="term" value="P:photosynthesis"/>
    <property type="evidence" value="ECO:0007669"/>
    <property type="project" value="UniProtKB-UniRule"/>
</dbReference>
<dbReference type="Gene3D" id="1.20.5.510">
    <property type="entry name" value="Single helix bin"/>
    <property type="match status" value="1"/>
</dbReference>
<dbReference type="HAMAP" id="MF_00522">
    <property type="entry name" value="PSI_PsaJ"/>
    <property type="match status" value="1"/>
</dbReference>
<dbReference type="InterPro" id="IPR002615">
    <property type="entry name" value="PSI_PsaJ"/>
</dbReference>
<dbReference type="InterPro" id="IPR036062">
    <property type="entry name" value="PSI_PsaJ_sf"/>
</dbReference>
<dbReference type="PANTHER" id="PTHR36082">
    <property type="match status" value="1"/>
</dbReference>
<dbReference type="PANTHER" id="PTHR36082:SF2">
    <property type="entry name" value="PHOTOSYSTEM I REACTION CENTER SUBUNIT IX"/>
    <property type="match status" value="1"/>
</dbReference>
<dbReference type="Pfam" id="PF01701">
    <property type="entry name" value="PSI_PsaJ"/>
    <property type="match status" value="1"/>
</dbReference>
<dbReference type="SUPFAM" id="SSF81544">
    <property type="entry name" value="Subunit IX of photosystem I reaction centre, PsaJ"/>
    <property type="match status" value="1"/>
</dbReference>
<name>PSAJ_EUGGR</name>